<accession>Q7VMV6</accession>
<organism>
    <name type="scientific">Haemophilus ducreyi (strain 35000HP / ATCC 700724)</name>
    <dbReference type="NCBI Taxonomy" id="233412"/>
    <lineage>
        <taxon>Bacteria</taxon>
        <taxon>Pseudomonadati</taxon>
        <taxon>Pseudomonadota</taxon>
        <taxon>Gammaproteobacteria</taxon>
        <taxon>Pasteurellales</taxon>
        <taxon>Pasteurellaceae</taxon>
        <taxon>Haemophilus</taxon>
    </lineage>
</organism>
<sequence length="286" mass="31310">MANKSVTVGQLEIANDRPFTLFGGMNVLESRDMAMRVCEKYVAVTNKLNVPYIFKASFDKANRSSIHSYRGPGMEEGLKIFQELKQTFGVNIITDVHEIYQCQPVAEVVDIIQLPAFLARQTDLVEAMARTGAVINVKKPQFLSPGQMGNIVEKIVECGNQQIILCDRGTNFGYDNLVVDMLSFNIMKKVSDGCPVIFDVTHALQCRDPFGSASGGRRDQVTELARAGLATGLAGLFLEAHPDPNTAKCDGPSALPLDKLEAFVAQMKAIDNLVKSFAELDTACRD</sequence>
<protein>
    <recommendedName>
        <fullName evidence="1">2-dehydro-3-deoxyphosphooctonate aldolase</fullName>
        <ecNumber evidence="1">2.5.1.55</ecNumber>
    </recommendedName>
    <alternativeName>
        <fullName evidence="1">3-deoxy-D-manno-octulosonic acid 8-phosphate synthase</fullName>
    </alternativeName>
    <alternativeName>
        <fullName evidence="1">KDO-8-phosphate synthase</fullName>
        <shortName evidence="1">KDO 8-P synthase</shortName>
        <shortName evidence="1">KDOPS</shortName>
    </alternativeName>
    <alternativeName>
        <fullName evidence="1">Phospho-2-dehydro-3-deoxyoctonate aldolase</fullName>
    </alternativeName>
</protein>
<proteinExistence type="inferred from homology"/>
<reference key="1">
    <citation type="submission" date="2003-06" db="EMBL/GenBank/DDBJ databases">
        <title>The complete genome sequence of Haemophilus ducreyi.</title>
        <authorList>
            <person name="Munson R.S. Jr."/>
            <person name="Ray W.C."/>
            <person name="Mahairas G."/>
            <person name="Sabo P."/>
            <person name="Mungur R."/>
            <person name="Johnson L."/>
            <person name="Nguyen D."/>
            <person name="Wang J."/>
            <person name="Forst C."/>
            <person name="Hood L."/>
        </authorList>
    </citation>
    <scope>NUCLEOTIDE SEQUENCE [LARGE SCALE GENOMIC DNA]</scope>
    <source>
        <strain>35000HP / ATCC 700724</strain>
    </source>
</reference>
<comment type="catalytic activity">
    <reaction evidence="1">
        <text>D-arabinose 5-phosphate + phosphoenolpyruvate + H2O = 3-deoxy-alpha-D-manno-2-octulosonate-8-phosphate + phosphate</text>
        <dbReference type="Rhea" id="RHEA:14053"/>
        <dbReference type="ChEBI" id="CHEBI:15377"/>
        <dbReference type="ChEBI" id="CHEBI:43474"/>
        <dbReference type="ChEBI" id="CHEBI:57693"/>
        <dbReference type="ChEBI" id="CHEBI:58702"/>
        <dbReference type="ChEBI" id="CHEBI:85985"/>
        <dbReference type="EC" id="2.5.1.55"/>
    </reaction>
</comment>
<comment type="pathway">
    <text evidence="1">Carbohydrate biosynthesis; 3-deoxy-D-manno-octulosonate biosynthesis; 3-deoxy-D-manno-octulosonate from D-ribulose 5-phosphate: step 2/3.</text>
</comment>
<comment type="pathway">
    <text evidence="1">Bacterial outer membrane biogenesis; lipopolysaccharide biosynthesis.</text>
</comment>
<comment type="subcellular location">
    <subcellularLocation>
        <location evidence="1">Cytoplasm</location>
    </subcellularLocation>
</comment>
<comment type="similarity">
    <text evidence="1">Belongs to the KdsA family.</text>
</comment>
<name>KDSA_HAEDU</name>
<dbReference type="EC" id="2.5.1.55" evidence="1"/>
<dbReference type="EMBL" id="AE017143">
    <property type="protein sequence ID" value="AAP95747.1"/>
    <property type="molecule type" value="Genomic_DNA"/>
</dbReference>
<dbReference type="RefSeq" id="WP_010944797.1">
    <property type="nucleotide sequence ID" value="NC_002940.2"/>
</dbReference>
<dbReference type="SMR" id="Q7VMV6"/>
<dbReference type="STRING" id="233412.HD_0857"/>
<dbReference type="KEGG" id="hdu:HD_0857"/>
<dbReference type="eggNOG" id="COG2877">
    <property type="taxonomic scope" value="Bacteria"/>
</dbReference>
<dbReference type="HOGENOM" id="CLU_036666_0_0_6"/>
<dbReference type="OrthoDB" id="9776934at2"/>
<dbReference type="UniPathway" id="UPA00030"/>
<dbReference type="UniPathway" id="UPA00357">
    <property type="reaction ID" value="UER00474"/>
</dbReference>
<dbReference type="Proteomes" id="UP000001022">
    <property type="component" value="Chromosome"/>
</dbReference>
<dbReference type="GO" id="GO:0005737">
    <property type="term" value="C:cytoplasm"/>
    <property type="evidence" value="ECO:0007669"/>
    <property type="project" value="UniProtKB-SubCell"/>
</dbReference>
<dbReference type="GO" id="GO:0008676">
    <property type="term" value="F:3-deoxy-8-phosphooctulonate synthase activity"/>
    <property type="evidence" value="ECO:0007669"/>
    <property type="project" value="UniProtKB-UniRule"/>
</dbReference>
<dbReference type="GO" id="GO:0019294">
    <property type="term" value="P:keto-3-deoxy-D-manno-octulosonic acid biosynthetic process"/>
    <property type="evidence" value="ECO:0007669"/>
    <property type="project" value="UniProtKB-UniRule"/>
</dbReference>
<dbReference type="FunFam" id="3.20.20.70:FF:000058">
    <property type="entry name" value="2-dehydro-3-deoxyphosphooctonate aldolase"/>
    <property type="match status" value="1"/>
</dbReference>
<dbReference type="Gene3D" id="3.20.20.70">
    <property type="entry name" value="Aldolase class I"/>
    <property type="match status" value="1"/>
</dbReference>
<dbReference type="HAMAP" id="MF_00056">
    <property type="entry name" value="KDO8P_synth"/>
    <property type="match status" value="1"/>
</dbReference>
<dbReference type="InterPro" id="IPR013785">
    <property type="entry name" value="Aldolase_TIM"/>
</dbReference>
<dbReference type="InterPro" id="IPR006218">
    <property type="entry name" value="DAHP1/KDSA"/>
</dbReference>
<dbReference type="InterPro" id="IPR006269">
    <property type="entry name" value="KDO8P_synthase"/>
</dbReference>
<dbReference type="NCBIfam" id="TIGR01362">
    <property type="entry name" value="KDO8P_synth"/>
    <property type="match status" value="1"/>
</dbReference>
<dbReference type="NCBIfam" id="NF003543">
    <property type="entry name" value="PRK05198.1"/>
    <property type="match status" value="1"/>
</dbReference>
<dbReference type="NCBIfam" id="NF009109">
    <property type="entry name" value="PRK12457.1"/>
    <property type="match status" value="1"/>
</dbReference>
<dbReference type="PANTHER" id="PTHR21057">
    <property type="entry name" value="PHOSPHO-2-DEHYDRO-3-DEOXYHEPTONATE ALDOLASE"/>
    <property type="match status" value="1"/>
</dbReference>
<dbReference type="Pfam" id="PF00793">
    <property type="entry name" value="DAHP_synth_1"/>
    <property type="match status" value="1"/>
</dbReference>
<dbReference type="SUPFAM" id="SSF51569">
    <property type="entry name" value="Aldolase"/>
    <property type="match status" value="1"/>
</dbReference>
<keyword id="KW-0963">Cytoplasm</keyword>
<keyword id="KW-0448">Lipopolysaccharide biosynthesis</keyword>
<keyword id="KW-1185">Reference proteome</keyword>
<keyword id="KW-0808">Transferase</keyword>
<gene>
    <name evidence="1" type="primary">kdsA</name>
    <name type="ordered locus">HD_0857</name>
</gene>
<evidence type="ECO:0000255" key="1">
    <source>
        <dbReference type="HAMAP-Rule" id="MF_00056"/>
    </source>
</evidence>
<feature type="chain" id="PRO_0000187130" description="2-dehydro-3-deoxyphosphooctonate aldolase">
    <location>
        <begin position="1"/>
        <end position="286"/>
    </location>
</feature>